<proteinExistence type="inferred from homology"/>
<dbReference type="EMBL" id="AL954747">
    <property type="protein sequence ID" value="CAD84963.1"/>
    <property type="molecule type" value="Genomic_DNA"/>
</dbReference>
<dbReference type="RefSeq" id="WP_011111657.1">
    <property type="nucleotide sequence ID" value="NC_004757.1"/>
</dbReference>
<dbReference type="SMR" id="Q82VM2"/>
<dbReference type="STRING" id="228410.NE1052"/>
<dbReference type="GeneID" id="87104239"/>
<dbReference type="KEGG" id="neu:NE1052"/>
<dbReference type="eggNOG" id="COG2834">
    <property type="taxonomic scope" value="Bacteria"/>
</dbReference>
<dbReference type="HOGENOM" id="CLU_087560_0_0_4"/>
<dbReference type="OrthoDB" id="9787361at2"/>
<dbReference type="PhylomeDB" id="Q82VM2"/>
<dbReference type="Proteomes" id="UP000001416">
    <property type="component" value="Chromosome"/>
</dbReference>
<dbReference type="GO" id="GO:0030288">
    <property type="term" value="C:outer membrane-bounded periplasmic space"/>
    <property type="evidence" value="ECO:0007669"/>
    <property type="project" value="TreeGrafter"/>
</dbReference>
<dbReference type="GO" id="GO:0044874">
    <property type="term" value="P:lipoprotein localization to outer membrane"/>
    <property type="evidence" value="ECO:0007669"/>
    <property type="project" value="UniProtKB-UniRule"/>
</dbReference>
<dbReference type="GO" id="GO:0042953">
    <property type="term" value="P:lipoprotein transport"/>
    <property type="evidence" value="ECO:0007669"/>
    <property type="project" value="InterPro"/>
</dbReference>
<dbReference type="CDD" id="cd16325">
    <property type="entry name" value="LolA"/>
    <property type="match status" value="1"/>
</dbReference>
<dbReference type="Gene3D" id="2.50.20.10">
    <property type="entry name" value="Lipoprotein localisation LolA/LolB/LppX"/>
    <property type="match status" value="1"/>
</dbReference>
<dbReference type="HAMAP" id="MF_00240">
    <property type="entry name" value="LolA"/>
    <property type="match status" value="1"/>
</dbReference>
<dbReference type="InterPro" id="IPR029046">
    <property type="entry name" value="LolA/LolB/LppX"/>
</dbReference>
<dbReference type="InterPro" id="IPR004564">
    <property type="entry name" value="OM_lipoprot_carrier_LolA-like"/>
</dbReference>
<dbReference type="InterPro" id="IPR018323">
    <property type="entry name" value="OM_lipoprot_carrier_LolA_Pbac"/>
</dbReference>
<dbReference type="NCBIfam" id="TIGR00547">
    <property type="entry name" value="lolA"/>
    <property type="match status" value="1"/>
</dbReference>
<dbReference type="PANTHER" id="PTHR35869">
    <property type="entry name" value="OUTER-MEMBRANE LIPOPROTEIN CARRIER PROTEIN"/>
    <property type="match status" value="1"/>
</dbReference>
<dbReference type="PANTHER" id="PTHR35869:SF1">
    <property type="entry name" value="OUTER-MEMBRANE LIPOPROTEIN CARRIER PROTEIN"/>
    <property type="match status" value="1"/>
</dbReference>
<dbReference type="Pfam" id="PF03548">
    <property type="entry name" value="LolA"/>
    <property type="match status" value="1"/>
</dbReference>
<dbReference type="SUPFAM" id="SSF89392">
    <property type="entry name" value="Prokaryotic lipoproteins and lipoprotein localization factors"/>
    <property type="match status" value="1"/>
</dbReference>
<feature type="signal peptide" evidence="1">
    <location>
        <begin position="1"/>
        <end position="21"/>
    </location>
</feature>
<feature type="chain" id="PRO_0000018266" description="Outer-membrane lipoprotein carrier protein">
    <location>
        <begin position="22"/>
        <end position="206"/>
    </location>
</feature>
<accession>Q82VM2</accession>
<organism>
    <name type="scientific">Nitrosomonas europaea (strain ATCC 19718 / CIP 103999 / KCTC 2705 / NBRC 14298)</name>
    <dbReference type="NCBI Taxonomy" id="228410"/>
    <lineage>
        <taxon>Bacteria</taxon>
        <taxon>Pseudomonadati</taxon>
        <taxon>Pseudomonadota</taxon>
        <taxon>Betaproteobacteria</taxon>
        <taxon>Nitrosomonadales</taxon>
        <taxon>Nitrosomonadaceae</taxon>
        <taxon>Nitrosomonas</taxon>
    </lineage>
</organism>
<reference key="1">
    <citation type="journal article" date="2003" name="J. Bacteriol.">
        <title>Complete genome sequence of the ammonia-oxidizing bacterium and obligate chemolithoautotroph Nitrosomonas europaea.</title>
        <authorList>
            <person name="Chain P."/>
            <person name="Lamerdin J.E."/>
            <person name="Larimer F.W."/>
            <person name="Regala W."/>
            <person name="Lao V."/>
            <person name="Land M.L."/>
            <person name="Hauser L."/>
            <person name="Hooper A.B."/>
            <person name="Klotz M.G."/>
            <person name="Norton J."/>
            <person name="Sayavedra-Soto L.A."/>
            <person name="Arciero D.M."/>
            <person name="Hommes N.G."/>
            <person name="Whittaker M.M."/>
            <person name="Arp D.J."/>
        </authorList>
    </citation>
    <scope>NUCLEOTIDE SEQUENCE [LARGE SCALE GENOMIC DNA]</scope>
    <source>
        <strain>ATCC 19718 / CIP 103999 / KCTC 2705 / NBRC 14298</strain>
    </source>
</reference>
<keyword id="KW-0143">Chaperone</keyword>
<keyword id="KW-0574">Periplasm</keyword>
<keyword id="KW-0653">Protein transport</keyword>
<keyword id="KW-1185">Reference proteome</keyword>
<keyword id="KW-0732">Signal</keyword>
<keyword id="KW-0813">Transport</keyword>
<comment type="function">
    <text evidence="1">Participates in the translocation of lipoproteins from the inner membrane to the outer membrane. Only forms a complex with a lipoprotein if the residue after the N-terminal Cys is not an aspartate (The Asp acts as a targeting signal to indicate that the lipoprotein should stay in the inner membrane).</text>
</comment>
<comment type="subunit">
    <text evidence="1">Monomer.</text>
</comment>
<comment type="subcellular location">
    <subcellularLocation>
        <location evidence="1">Periplasm</location>
    </subcellularLocation>
</comment>
<comment type="similarity">
    <text evidence="1">Belongs to the LolA family.</text>
</comment>
<sequence>MTRLLFVLVLSVCLLPVPVKASAVKSLKTFVNKALTFQANFSQTLLDKNFQVIRKASGSMMFERPGKFRWTYDQPYQQLIVGDGKQVWFYDQDLAQVTVHRLDQALGSTPAALLAGGNTIERDFNLQEIDVQGETEWLEAIPKNQENSFELIRLGFSKTGILREMVLRDSFDQVTWLIFSEIEQNPTLTPDLFQFTPPEGVDVIRD</sequence>
<protein>
    <recommendedName>
        <fullName evidence="1">Outer-membrane lipoprotein carrier protein</fullName>
    </recommendedName>
</protein>
<evidence type="ECO:0000255" key="1">
    <source>
        <dbReference type="HAMAP-Rule" id="MF_00240"/>
    </source>
</evidence>
<gene>
    <name evidence="1" type="primary">lolA</name>
    <name type="ordered locus">NE1052</name>
</gene>
<name>LOLA_NITEU</name>